<reference key="1">
    <citation type="journal article" date="1990" name="J. Bacteriol.">
        <title>Cloning and sequencing of a bile acid-inducible operon from Eubacterium sp. strain VPI 12708.</title>
        <authorList>
            <person name="Mallonee D.H."/>
            <person name="White W.B."/>
            <person name="Hylemon P.B."/>
        </authorList>
    </citation>
    <scope>NUCLEOTIDE SEQUENCE [GENOMIC DNA]</scope>
    <scope>INDUCTION</scope>
    <source>
        <strain>JCM 10418 / VPI 12708</strain>
    </source>
</reference>
<reference key="2">
    <citation type="journal article" date="1992" name="J. Bacteriol.">
        <title>The bile acid-inducible baiB gene from Eubacterium sp. strain VPI 12708 encodes a bile acid-coenzyme A ligase.</title>
        <authorList>
            <person name="Mallonee D.H."/>
            <person name="Adams J.L."/>
            <person name="Hylemon P.B."/>
        </authorList>
    </citation>
    <scope>FUNCTION</scope>
    <scope>CATALYTIC ACTIVITY</scope>
    <scope>COFACTOR</scope>
    <scope>BIOPHYSICOCHEMICAL PROPERTIES</scope>
    <scope>ACTIVITY REGULATION</scope>
    <source>
        <strain>JCM 10418 / VPI 12708</strain>
    </source>
</reference>
<organism>
    <name type="scientific">Clostridium scindens (strain JCM 10418 / VPI 12708)</name>
    <dbReference type="NCBI Taxonomy" id="29347"/>
    <lineage>
        <taxon>Bacteria</taxon>
        <taxon>Bacillati</taxon>
        <taxon>Bacillota</taxon>
        <taxon>Clostridia</taxon>
        <taxon>Lachnospirales</taxon>
        <taxon>Lachnospiraceae</taxon>
    </lineage>
</organism>
<protein>
    <recommendedName>
        <fullName evidence="3">Bile acid--coenzyme A ligase</fullName>
        <ecNumber evidence="1">6.2.1.7</ecNumber>
    </recommendedName>
    <alternativeName>
        <fullName evidence="5">Cholate--CoA ligase</fullName>
    </alternativeName>
</protein>
<gene>
    <name evidence="3 4" type="primary">baiB</name>
</gene>
<accession>P19409</accession>
<sequence>MHKKSACEREGKELKRDFFNKFNLGTSNFVTPGKQLEYVSECKPDSTAVICLDKEQNCSVITWHQLHVYSSQLAWYLIENEIGPGSIVLTMFPNSIEHIIAVFAIWKAGACYMPMSYKAAESEIREACDTIHPNAAFAECKIPGLKFCLSADEIYEAMEGRSKEMPSDRLANPNMISLSGGTSGKMKFIRQNLPCGLDDETIRSWSLMSGMGFEQRQLLVGPLFHGAPHSAAFNGLFMGNTLVLTRNLCPGNILNMIKKYKIEFIQMVPTLMNRLAKLEGVGKEDFASLKALCHTGGVCSPWLKQIWIDLLGPEKIYEMYSMTECIGLTCIRGDEWVKHPGSIGRPVGDSKVSIRDENGKEVAPFEIGEIYMTAPASYLVTEYINWEPLEVKEGGFRSVGDIGYVDEQGYLYFSDRRSDMLVSGGENVFATEVETALLRYKDILDAVVVGIPDEDLGRRLHAVIETGKEIPAEELKTFLRKYLTPYKIPKTFEFVRSIRRGDNGKADRKRILEDCIARGG</sequence>
<dbReference type="EC" id="6.2.1.7" evidence="1"/>
<dbReference type="EMBL" id="U57489">
    <property type="protein sequence ID" value="AAC45410.1"/>
    <property type="molecule type" value="Genomic_DNA"/>
</dbReference>
<dbReference type="PDB" id="4LGC">
    <property type="method" value="X-ray"/>
    <property type="resolution" value="2.19 A"/>
    <property type="chains" value="A=1-520"/>
</dbReference>
<dbReference type="PDBsum" id="4LGC"/>
<dbReference type="SMR" id="P19409"/>
<dbReference type="SwissLipids" id="SLP:000001349"/>
<dbReference type="KEGG" id="ag:AAC45410"/>
<dbReference type="BioCyc" id="MetaCyc:BAIBEUBSP-MONOMER"/>
<dbReference type="UniPathway" id="UPA00221"/>
<dbReference type="EvolutionaryTrace" id="P19409"/>
<dbReference type="GO" id="GO:0005737">
    <property type="term" value="C:cytoplasm"/>
    <property type="evidence" value="ECO:0000305"/>
    <property type="project" value="UniProt"/>
</dbReference>
<dbReference type="GO" id="GO:0005524">
    <property type="term" value="F:ATP binding"/>
    <property type="evidence" value="ECO:0007669"/>
    <property type="project" value="UniProtKB-KW"/>
</dbReference>
<dbReference type="GO" id="GO:0047747">
    <property type="term" value="F:cholate-CoA ligase activity"/>
    <property type="evidence" value="ECO:0000314"/>
    <property type="project" value="UniProt"/>
</dbReference>
<dbReference type="GO" id="GO:0006699">
    <property type="term" value="P:bile acid biosynthetic process"/>
    <property type="evidence" value="ECO:0007669"/>
    <property type="project" value="UniProtKB-UniPathway"/>
</dbReference>
<dbReference type="GO" id="GO:0030573">
    <property type="term" value="P:bile acid catabolic process"/>
    <property type="evidence" value="ECO:0000314"/>
    <property type="project" value="UniProt"/>
</dbReference>
<dbReference type="GO" id="GO:0016042">
    <property type="term" value="P:lipid catabolic process"/>
    <property type="evidence" value="ECO:0007669"/>
    <property type="project" value="UniProtKB-KW"/>
</dbReference>
<dbReference type="CDD" id="cd05929">
    <property type="entry name" value="BACL_like"/>
    <property type="match status" value="1"/>
</dbReference>
<dbReference type="Gene3D" id="3.30.300.30">
    <property type="match status" value="1"/>
</dbReference>
<dbReference type="Gene3D" id="3.40.50.12780">
    <property type="entry name" value="N-terminal domain of ligase-like"/>
    <property type="match status" value="1"/>
</dbReference>
<dbReference type="InterPro" id="IPR025110">
    <property type="entry name" value="AMP-bd_C"/>
</dbReference>
<dbReference type="InterPro" id="IPR045851">
    <property type="entry name" value="AMP-bd_C_sf"/>
</dbReference>
<dbReference type="InterPro" id="IPR000873">
    <property type="entry name" value="AMP-dep_synth/lig_dom"/>
</dbReference>
<dbReference type="InterPro" id="IPR042099">
    <property type="entry name" value="ANL_N_sf"/>
</dbReference>
<dbReference type="InterPro" id="IPR050237">
    <property type="entry name" value="ATP-dep_AMP-bd_enzyme"/>
</dbReference>
<dbReference type="InterPro" id="IPR054986">
    <property type="entry name" value="Bile_CoA_ligase"/>
</dbReference>
<dbReference type="NCBIfam" id="NF038344">
    <property type="entry name" value="bile_CoA_BaiB"/>
    <property type="match status" value="1"/>
</dbReference>
<dbReference type="PANTHER" id="PTHR43767">
    <property type="entry name" value="LONG-CHAIN-FATTY-ACID--COA LIGASE"/>
    <property type="match status" value="1"/>
</dbReference>
<dbReference type="PANTHER" id="PTHR43767:SF1">
    <property type="entry name" value="NONRIBOSOMAL PEPTIDE SYNTHASE PES1 (EUROFUNG)-RELATED"/>
    <property type="match status" value="1"/>
</dbReference>
<dbReference type="Pfam" id="PF00501">
    <property type="entry name" value="AMP-binding"/>
    <property type="match status" value="1"/>
</dbReference>
<dbReference type="Pfam" id="PF13193">
    <property type="entry name" value="AMP-binding_C"/>
    <property type="match status" value="1"/>
</dbReference>
<dbReference type="SUPFAM" id="SSF56801">
    <property type="entry name" value="Acetyl-CoA synthetase-like"/>
    <property type="match status" value="1"/>
</dbReference>
<dbReference type="PROSITE" id="PS00455">
    <property type="entry name" value="AMP_BINDING"/>
    <property type="match status" value="1"/>
</dbReference>
<comment type="function">
    <text evidence="1">Functions in the bile acid 7alpha-dehydroxylation pathway, which forms secondary bile acids via the 7alpha-dehydroxylation of primary bile acids, and is carried out by intestinal anaerobic bacteria. Catalyzes the initial step in this pathway, i.e. the ATP-dependent thioesterification of primary bile acids with coenzyme A. Is active with C-24 bile acids with free carboxyl groups such as cholate, deoxycholate and chenodeoxycholate. Produces AMP and pyrophosphate in addition to the bile acid-CoA thioester.</text>
</comment>
<comment type="catalytic activity">
    <reaction evidence="1">
        <text>cholate + ATP + CoA = choloyl-CoA + AMP + diphosphate</text>
        <dbReference type="Rhea" id="RHEA:23532"/>
        <dbReference type="ChEBI" id="CHEBI:29747"/>
        <dbReference type="ChEBI" id="CHEBI:30616"/>
        <dbReference type="ChEBI" id="CHEBI:33019"/>
        <dbReference type="ChEBI" id="CHEBI:57287"/>
        <dbReference type="ChEBI" id="CHEBI:57373"/>
        <dbReference type="ChEBI" id="CHEBI:456215"/>
        <dbReference type="EC" id="6.2.1.7"/>
    </reaction>
    <physiologicalReaction direction="left-to-right" evidence="6">
        <dbReference type="Rhea" id="RHEA:23533"/>
    </physiologicalReaction>
</comment>
<comment type="catalytic activity">
    <reaction evidence="1">
        <text>deoxycholate + ATP + CoA = deoxycholoyl-CoA + AMP + diphosphate</text>
        <dbReference type="Rhea" id="RHEA:47128"/>
        <dbReference type="ChEBI" id="CHEBI:23614"/>
        <dbReference type="ChEBI" id="CHEBI:30616"/>
        <dbReference type="ChEBI" id="CHEBI:33019"/>
        <dbReference type="ChEBI" id="CHEBI:57287"/>
        <dbReference type="ChEBI" id="CHEBI:58810"/>
        <dbReference type="ChEBI" id="CHEBI:456215"/>
    </reaction>
    <physiologicalReaction direction="left-to-right" evidence="6">
        <dbReference type="Rhea" id="RHEA:47129"/>
    </physiologicalReaction>
</comment>
<comment type="catalytic activity">
    <reaction evidence="1">
        <text>chenodeoxycholate + ATP + CoA = chenodeoxycholoyl-CoA + AMP + diphosphate</text>
        <dbReference type="Rhea" id="RHEA:43764"/>
        <dbReference type="ChEBI" id="CHEBI:30616"/>
        <dbReference type="ChEBI" id="CHEBI:33019"/>
        <dbReference type="ChEBI" id="CHEBI:36234"/>
        <dbReference type="ChEBI" id="CHEBI:57287"/>
        <dbReference type="ChEBI" id="CHEBI:62989"/>
        <dbReference type="ChEBI" id="CHEBI:456215"/>
    </reaction>
    <physiologicalReaction direction="left-to-right" evidence="6">
        <dbReference type="Rhea" id="RHEA:43765"/>
    </physiologicalReaction>
</comment>
<comment type="cofactor">
    <cofactor evidence="1">
        <name>Mg(2+)</name>
        <dbReference type="ChEBI" id="CHEBI:18420"/>
    </cofactor>
</comment>
<comment type="activity regulation">
    <text evidence="1">Inhibited by diphosphate.</text>
</comment>
<comment type="biophysicochemical properties">
    <kinetics>
        <KM evidence="1">22 uM for cholate</KM>
        <KM evidence="1">200 uM for ATP</KM>
    </kinetics>
    <temperatureDependence>
        <text evidence="1">Optimum temperature is 50 degrees Celsius.</text>
    </temperatureDependence>
</comment>
<comment type="pathway">
    <text evidence="6">Lipid metabolism; bile acid biosynthesis.</text>
</comment>
<comment type="subunit">
    <text evidence="6">Homodimer.</text>
</comment>
<comment type="induction">
    <text evidence="2">Induced by bile acids such as cholate.</text>
</comment>
<comment type="similarity">
    <text evidence="5">Belongs to the ATP-dependent AMP-binding enzyme family.</text>
</comment>
<keyword id="KW-0002">3D-structure</keyword>
<keyword id="KW-0067">ATP-binding</keyword>
<keyword id="KW-0088">Bile acid catabolism</keyword>
<keyword id="KW-0436">Ligase</keyword>
<keyword id="KW-0442">Lipid degradation</keyword>
<keyword id="KW-0443">Lipid metabolism</keyword>
<keyword id="KW-0547">Nucleotide-binding</keyword>
<keyword id="KW-0753">Steroid metabolism</keyword>
<name>BAIB_CLOSV</name>
<feature type="chain" id="PRO_0000193063" description="Bile acid--coenzyme A ligase">
    <location>
        <begin position="1"/>
        <end position="520"/>
    </location>
</feature>
<feature type="helix" evidence="7">
    <location>
        <begin position="32"/>
        <end position="42"/>
    </location>
</feature>
<feature type="strand" evidence="7">
    <location>
        <begin position="46"/>
        <end position="52"/>
    </location>
</feature>
<feature type="strand" evidence="7">
    <location>
        <begin position="58"/>
        <end position="62"/>
    </location>
</feature>
<feature type="helix" evidence="7">
    <location>
        <begin position="63"/>
        <end position="79"/>
    </location>
</feature>
<feature type="strand" evidence="7">
    <location>
        <begin position="87"/>
        <end position="90"/>
    </location>
</feature>
<feature type="helix" evidence="7">
    <location>
        <begin position="96"/>
        <end position="107"/>
    </location>
</feature>
<feature type="strand" evidence="7">
    <location>
        <begin position="111"/>
        <end position="114"/>
    </location>
</feature>
<feature type="helix" evidence="7">
    <location>
        <begin position="121"/>
        <end position="131"/>
    </location>
</feature>
<feature type="strand" evidence="7">
    <location>
        <begin position="134"/>
        <end position="137"/>
    </location>
</feature>
<feature type="helix" evidence="7">
    <location>
        <begin position="153"/>
        <end position="158"/>
    </location>
</feature>
<feature type="strand" evidence="7">
    <location>
        <begin position="175"/>
        <end position="179"/>
    </location>
</feature>
<feature type="strand" evidence="7">
    <location>
        <begin position="187"/>
        <end position="191"/>
    </location>
</feature>
<feature type="helix" evidence="7">
    <location>
        <begin position="199"/>
        <end position="209"/>
    </location>
</feature>
<feature type="strand" evidence="7">
    <location>
        <begin position="217"/>
        <end position="219"/>
    </location>
</feature>
<feature type="helix" evidence="7">
    <location>
        <begin position="226"/>
        <end position="237"/>
    </location>
</feature>
<feature type="strand" evidence="7">
    <location>
        <begin position="242"/>
        <end position="246"/>
    </location>
</feature>
<feature type="helix" evidence="7">
    <location>
        <begin position="250"/>
        <end position="259"/>
    </location>
</feature>
<feature type="strand" evidence="7">
    <location>
        <begin position="264"/>
        <end position="267"/>
    </location>
</feature>
<feature type="helix" evidence="7">
    <location>
        <begin position="269"/>
        <end position="277"/>
    </location>
</feature>
<feature type="helix" evidence="7">
    <location>
        <begin position="283"/>
        <end position="286"/>
    </location>
</feature>
<feature type="strand" evidence="7">
    <location>
        <begin position="290"/>
        <end position="294"/>
    </location>
</feature>
<feature type="helix" evidence="7">
    <location>
        <begin position="301"/>
        <end position="311"/>
    </location>
</feature>
<feature type="helix" evidence="7">
    <location>
        <begin position="313"/>
        <end position="315"/>
    </location>
</feature>
<feature type="strand" evidence="7">
    <location>
        <begin position="316"/>
        <end position="321"/>
    </location>
</feature>
<feature type="helix" evidence="7">
    <location>
        <begin position="323"/>
        <end position="325"/>
    </location>
</feature>
<feature type="strand" evidence="7">
    <location>
        <begin position="328"/>
        <end position="332"/>
    </location>
</feature>
<feature type="helix" evidence="7">
    <location>
        <begin position="333"/>
        <end position="338"/>
    </location>
</feature>
<feature type="strand" evidence="7">
    <location>
        <begin position="344"/>
        <end position="347"/>
    </location>
</feature>
<feature type="strand" evidence="7">
    <location>
        <begin position="352"/>
        <end position="355"/>
    </location>
</feature>
<feature type="strand" evidence="7">
    <location>
        <begin position="368"/>
        <end position="372"/>
    </location>
</feature>
<feature type="helix" evidence="7">
    <location>
        <begin position="376"/>
        <end position="379"/>
    </location>
</feature>
<feature type="strand" evidence="7">
    <location>
        <begin position="381"/>
        <end position="383"/>
    </location>
</feature>
<feature type="turn" evidence="7">
    <location>
        <begin position="393"/>
        <end position="395"/>
    </location>
</feature>
<feature type="strand" evidence="7">
    <location>
        <begin position="402"/>
        <end position="405"/>
    </location>
</feature>
<feature type="strand" evidence="7">
    <location>
        <begin position="411"/>
        <end position="413"/>
    </location>
</feature>
<evidence type="ECO:0000269" key="1">
    <source>
    </source>
</evidence>
<evidence type="ECO:0000269" key="2">
    <source>
    </source>
</evidence>
<evidence type="ECO:0000303" key="3">
    <source>
    </source>
</evidence>
<evidence type="ECO:0000303" key="4">
    <source>
    </source>
</evidence>
<evidence type="ECO:0000305" key="5"/>
<evidence type="ECO:0000305" key="6">
    <source>
    </source>
</evidence>
<evidence type="ECO:0007829" key="7">
    <source>
        <dbReference type="PDB" id="4LGC"/>
    </source>
</evidence>
<proteinExistence type="evidence at protein level"/>